<dbReference type="EC" id="4.2.1.11" evidence="1"/>
<dbReference type="EMBL" id="AM040264">
    <property type="protein sequence ID" value="CAJ11111.1"/>
    <property type="molecule type" value="Genomic_DNA"/>
</dbReference>
<dbReference type="RefSeq" id="WP_002964261.1">
    <property type="nucleotide sequence ID" value="NZ_KN046823.1"/>
</dbReference>
<dbReference type="SMR" id="Q2YPV0"/>
<dbReference type="STRING" id="359391.BAB1_1155"/>
<dbReference type="GeneID" id="97533615"/>
<dbReference type="KEGG" id="bmf:BAB1_1155"/>
<dbReference type="PATRIC" id="fig|359391.11.peg.54"/>
<dbReference type="HOGENOM" id="CLU_031223_2_1_5"/>
<dbReference type="PhylomeDB" id="Q2YPV0"/>
<dbReference type="BRENDA" id="4.2.1.11">
    <property type="organism ID" value="994"/>
</dbReference>
<dbReference type="UniPathway" id="UPA00109">
    <property type="reaction ID" value="UER00187"/>
</dbReference>
<dbReference type="Proteomes" id="UP000002719">
    <property type="component" value="Chromosome I"/>
</dbReference>
<dbReference type="GO" id="GO:0009986">
    <property type="term" value="C:cell surface"/>
    <property type="evidence" value="ECO:0007669"/>
    <property type="project" value="UniProtKB-SubCell"/>
</dbReference>
<dbReference type="GO" id="GO:0005576">
    <property type="term" value="C:extracellular region"/>
    <property type="evidence" value="ECO:0007669"/>
    <property type="project" value="UniProtKB-SubCell"/>
</dbReference>
<dbReference type="GO" id="GO:0000015">
    <property type="term" value="C:phosphopyruvate hydratase complex"/>
    <property type="evidence" value="ECO:0007669"/>
    <property type="project" value="InterPro"/>
</dbReference>
<dbReference type="GO" id="GO:0000287">
    <property type="term" value="F:magnesium ion binding"/>
    <property type="evidence" value="ECO:0007669"/>
    <property type="project" value="UniProtKB-UniRule"/>
</dbReference>
<dbReference type="GO" id="GO:0004634">
    <property type="term" value="F:phosphopyruvate hydratase activity"/>
    <property type="evidence" value="ECO:0007669"/>
    <property type="project" value="UniProtKB-UniRule"/>
</dbReference>
<dbReference type="GO" id="GO:0006096">
    <property type="term" value="P:glycolytic process"/>
    <property type="evidence" value="ECO:0007669"/>
    <property type="project" value="UniProtKB-UniRule"/>
</dbReference>
<dbReference type="CDD" id="cd03313">
    <property type="entry name" value="enolase"/>
    <property type="match status" value="1"/>
</dbReference>
<dbReference type="FunFam" id="3.20.20.120:FF:000001">
    <property type="entry name" value="Enolase"/>
    <property type="match status" value="1"/>
</dbReference>
<dbReference type="FunFam" id="3.30.390.10:FF:000001">
    <property type="entry name" value="Enolase"/>
    <property type="match status" value="1"/>
</dbReference>
<dbReference type="Gene3D" id="3.20.20.120">
    <property type="entry name" value="Enolase-like C-terminal domain"/>
    <property type="match status" value="1"/>
</dbReference>
<dbReference type="Gene3D" id="3.30.390.10">
    <property type="entry name" value="Enolase-like, N-terminal domain"/>
    <property type="match status" value="1"/>
</dbReference>
<dbReference type="HAMAP" id="MF_00318">
    <property type="entry name" value="Enolase"/>
    <property type="match status" value="1"/>
</dbReference>
<dbReference type="InterPro" id="IPR000941">
    <property type="entry name" value="Enolase"/>
</dbReference>
<dbReference type="InterPro" id="IPR036849">
    <property type="entry name" value="Enolase-like_C_sf"/>
</dbReference>
<dbReference type="InterPro" id="IPR029017">
    <property type="entry name" value="Enolase-like_N"/>
</dbReference>
<dbReference type="InterPro" id="IPR020810">
    <property type="entry name" value="Enolase_C"/>
</dbReference>
<dbReference type="InterPro" id="IPR020809">
    <property type="entry name" value="Enolase_CS"/>
</dbReference>
<dbReference type="InterPro" id="IPR020811">
    <property type="entry name" value="Enolase_N"/>
</dbReference>
<dbReference type="NCBIfam" id="TIGR01060">
    <property type="entry name" value="eno"/>
    <property type="match status" value="1"/>
</dbReference>
<dbReference type="PANTHER" id="PTHR11902">
    <property type="entry name" value="ENOLASE"/>
    <property type="match status" value="1"/>
</dbReference>
<dbReference type="PANTHER" id="PTHR11902:SF1">
    <property type="entry name" value="ENOLASE"/>
    <property type="match status" value="1"/>
</dbReference>
<dbReference type="Pfam" id="PF00113">
    <property type="entry name" value="Enolase_C"/>
    <property type="match status" value="1"/>
</dbReference>
<dbReference type="Pfam" id="PF03952">
    <property type="entry name" value="Enolase_N"/>
    <property type="match status" value="1"/>
</dbReference>
<dbReference type="PIRSF" id="PIRSF001400">
    <property type="entry name" value="Enolase"/>
    <property type="match status" value="1"/>
</dbReference>
<dbReference type="PRINTS" id="PR00148">
    <property type="entry name" value="ENOLASE"/>
</dbReference>
<dbReference type="SFLD" id="SFLDF00002">
    <property type="entry name" value="enolase"/>
    <property type="match status" value="1"/>
</dbReference>
<dbReference type="SFLD" id="SFLDG00178">
    <property type="entry name" value="enolase"/>
    <property type="match status" value="1"/>
</dbReference>
<dbReference type="SMART" id="SM01192">
    <property type="entry name" value="Enolase_C"/>
    <property type="match status" value="1"/>
</dbReference>
<dbReference type="SMART" id="SM01193">
    <property type="entry name" value="Enolase_N"/>
    <property type="match status" value="1"/>
</dbReference>
<dbReference type="SUPFAM" id="SSF51604">
    <property type="entry name" value="Enolase C-terminal domain-like"/>
    <property type="match status" value="1"/>
</dbReference>
<dbReference type="SUPFAM" id="SSF54826">
    <property type="entry name" value="Enolase N-terminal domain-like"/>
    <property type="match status" value="1"/>
</dbReference>
<dbReference type="PROSITE" id="PS00164">
    <property type="entry name" value="ENOLASE"/>
    <property type="match status" value="1"/>
</dbReference>
<organism>
    <name type="scientific">Brucella abortus (strain 2308)</name>
    <dbReference type="NCBI Taxonomy" id="359391"/>
    <lineage>
        <taxon>Bacteria</taxon>
        <taxon>Pseudomonadati</taxon>
        <taxon>Pseudomonadota</taxon>
        <taxon>Alphaproteobacteria</taxon>
        <taxon>Hyphomicrobiales</taxon>
        <taxon>Brucellaceae</taxon>
        <taxon>Brucella/Ochrobactrum group</taxon>
        <taxon>Brucella</taxon>
    </lineage>
</organism>
<comment type="function">
    <text evidence="1">Catalyzes the reversible conversion of 2-phosphoglycerate (2-PG) into phosphoenolpyruvate (PEP). It is essential for the degradation of carbohydrates via glycolysis.</text>
</comment>
<comment type="catalytic activity">
    <reaction evidence="1">
        <text>(2R)-2-phosphoglycerate = phosphoenolpyruvate + H2O</text>
        <dbReference type="Rhea" id="RHEA:10164"/>
        <dbReference type="ChEBI" id="CHEBI:15377"/>
        <dbReference type="ChEBI" id="CHEBI:58289"/>
        <dbReference type="ChEBI" id="CHEBI:58702"/>
        <dbReference type="EC" id="4.2.1.11"/>
    </reaction>
</comment>
<comment type="cofactor">
    <cofactor evidence="1">
        <name>Mg(2+)</name>
        <dbReference type="ChEBI" id="CHEBI:18420"/>
    </cofactor>
    <text evidence="1">Binds a second Mg(2+) ion via substrate during catalysis.</text>
</comment>
<comment type="pathway">
    <text evidence="1">Carbohydrate degradation; glycolysis; pyruvate from D-glyceraldehyde 3-phosphate: step 4/5.</text>
</comment>
<comment type="subcellular location">
    <subcellularLocation>
        <location evidence="1">Cytoplasm</location>
    </subcellularLocation>
    <subcellularLocation>
        <location evidence="1">Secreted</location>
    </subcellularLocation>
    <subcellularLocation>
        <location evidence="1">Cell surface</location>
    </subcellularLocation>
    <text evidence="1">Fractions of enolase are present in both the cytoplasm and on the cell surface.</text>
</comment>
<comment type="similarity">
    <text evidence="1">Belongs to the enolase family.</text>
</comment>
<feature type="chain" id="PRO_0000267006" description="Enolase">
    <location>
        <begin position="1"/>
        <end position="425"/>
    </location>
</feature>
<feature type="active site" description="Proton donor" evidence="1">
    <location>
        <position position="204"/>
    </location>
</feature>
<feature type="active site" description="Proton acceptor" evidence="1">
    <location>
        <position position="336"/>
    </location>
</feature>
<feature type="binding site" evidence="1">
    <location>
        <position position="162"/>
    </location>
    <ligand>
        <name>(2R)-2-phosphoglycerate</name>
        <dbReference type="ChEBI" id="CHEBI:58289"/>
    </ligand>
</feature>
<feature type="binding site" evidence="1">
    <location>
        <position position="241"/>
    </location>
    <ligand>
        <name>Mg(2+)</name>
        <dbReference type="ChEBI" id="CHEBI:18420"/>
    </ligand>
</feature>
<feature type="binding site" evidence="1">
    <location>
        <position position="284"/>
    </location>
    <ligand>
        <name>Mg(2+)</name>
        <dbReference type="ChEBI" id="CHEBI:18420"/>
    </ligand>
</feature>
<feature type="binding site" evidence="1">
    <location>
        <position position="311"/>
    </location>
    <ligand>
        <name>Mg(2+)</name>
        <dbReference type="ChEBI" id="CHEBI:18420"/>
    </ligand>
</feature>
<feature type="binding site" evidence="1">
    <location>
        <position position="336"/>
    </location>
    <ligand>
        <name>(2R)-2-phosphoglycerate</name>
        <dbReference type="ChEBI" id="CHEBI:58289"/>
    </ligand>
</feature>
<feature type="binding site" evidence="1">
    <location>
        <position position="365"/>
    </location>
    <ligand>
        <name>(2R)-2-phosphoglycerate</name>
        <dbReference type="ChEBI" id="CHEBI:58289"/>
    </ligand>
</feature>
<feature type="binding site" evidence="1">
    <location>
        <position position="366"/>
    </location>
    <ligand>
        <name>(2R)-2-phosphoglycerate</name>
        <dbReference type="ChEBI" id="CHEBI:58289"/>
    </ligand>
</feature>
<feature type="binding site" evidence="1">
    <location>
        <position position="387"/>
    </location>
    <ligand>
        <name>(2R)-2-phosphoglycerate</name>
        <dbReference type="ChEBI" id="CHEBI:58289"/>
    </ligand>
</feature>
<gene>
    <name evidence="1" type="primary">eno</name>
    <name type="ordered locus">BAB1_1155</name>
</gene>
<accession>Q2YPV0</accession>
<protein>
    <recommendedName>
        <fullName evidence="1">Enolase</fullName>
        <ecNumber evidence="1">4.2.1.11</ecNumber>
    </recommendedName>
    <alternativeName>
        <fullName evidence="1">2-phospho-D-glycerate hydro-lyase</fullName>
    </alternativeName>
    <alternativeName>
        <fullName evidence="1">2-phosphoglycerate dehydratase</fullName>
    </alternativeName>
</protein>
<evidence type="ECO:0000255" key="1">
    <source>
        <dbReference type="HAMAP-Rule" id="MF_00318"/>
    </source>
</evidence>
<keyword id="KW-0963">Cytoplasm</keyword>
<keyword id="KW-0324">Glycolysis</keyword>
<keyword id="KW-0456">Lyase</keyword>
<keyword id="KW-0460">Magnesium</keyword>
<keyword id="KW-0479">Metal-binding</keyword>
<keyword id="KW-1185">Reference proteome</keyword>
<keyword id="KW-0964">Secreted</keyword>
<proteinExistence type="inferred from homology"/>
<reference key="1">
    <citation type="journal article" date="2005" name="Infect. Immun.">
        <title>Whole-genome analyses of speciation events in pathogenic Brucellae.</title>
        <authorList>
            <person name="Chain P.S."/>
            <person name="Comerci D.J."/>
            <person name="Tolmasky M.E."/>
            <person name="Larimer F.W."/>
            <person name="Malfatti S.A."/>
            <person name="Vergez L.M."/>
            <person name="Aguero F."/>
            <person name="Land M.L."/>
            <person name="Ugalde R.A."/>
            <person name="Garcia E."/>
        </authorList>
    </citation>
    <scope>NUCLEOTIDE SEQUENCE [LARGE SCALE GENOMIC DNA]</scope>
    <source>
        <strain>2308</strain>
    </source>
</reference>
<sequence>MTAIIDIVGREILDSRGNPTVEVDVVLEDGSFGRAAVPSGASTGAHEAVELRDGGSRYLGKGVEKAVEVVNGKIFDAIAGMDAESQLLIDQTLIDLDGSANKGNLGANAILGVSLAVAKAAAQASGLPLYRYVGGTNAHVLPVPMMNIINGGAHADNPIDFQEFMILPVGATSIREAVRYGSEVFHTLKKRLKDAGHNTNVGDEGGFAPNLKNAQAALDFIMESIEKAGFKPGEDIALGLDCAATEFFKDGNYVYEGERKTRDPKAQAKYLAKLASDYPIVTIEDGMAEDDWEGWKYLTDLIGNKCQLVGDDLFVTNSARLRDGIRLGVANSILVKVNQIGSLSETLDAVETAHKAGYTAVMSHRSGETEDSTIADLAVATNCGQIKTGSLARSDRTAKYNQLIRIEEELGKQARYAGRSALKLL</sequence>
<name>ENO_BRUA2</name>